<gene>
    <name evidence="1" type="primary">hldD</name>
    <name type="ordered locus">ECIAI1_3791</name>
</gene>
<dbReference type="EC" id="5.1.3.20" evidence="1"/>
<dbReference type="EMBL" id="CU928160">
    <property type="protein sequence ID" value="CAR00588.1"/>
    <property type="molecule type" value="Genomic_DNA"/>
</dbReference>
<dbReference type="SMR" id="B7M4A5"/>
<dbReference type="KEGG" id="ecr:ECIAI1_3791"/>
<dbReference type="HOGENOM" id="CLU_007383_1_3_6"/>
<dbReference type="UniPathway" id="UPA00356">
    <property type="reaction ID" value="UER00440"/>
</dbReference>
<dbReference type="GO" id="GO:0008712">
    <property type="term" value="F:ADP-glyceromanno-heptose 6-epimerase activity"/>
    <property type="evidence" value="ECO:0007669"/>
    <property type="project" value="UniProtKB-UniRule"/>
</dbReference>
<dbReference type="GO" id="GO:0050661">
    <property type="term" value="F:NADP binding"/>
    <property type="evidence" value="ECO:0007669"/>
    <property type="project" value="InterPro"/>
</dbReference>
<dbReference type="GO" id="GO:0097171">
    <property type="term" value="P:ADP-L-glycero-beta-D-manno-heptose biosynthetic process"/>
    <property type="evidence" value="ECO:0007669"/>
    <property type="project" value="UniProtKB-UniPathway"/>
</dbReference>
<dbReference type="GO" id="GO:0005975">
    <property type="term" value="P:carbohydrate metabolic process"/>
    <property type="evidence" value="ECO:0007669"/>
    <property type="project" value="UniProtKB-UniRule"/>
</dbReference>
<dbReference type="CDD" id="cd05248">
    <property type="entry name" value="ADP_GME_SDR_e"/>
    <property type="match status" value="1"/>
</dbReference>
<dbReference type="Gene3D" id="3.40.50.720">
    <property type="entry name" value="NAD(P)-binding Rossmann-like Domain"/>
    <property type="match status" value="1"/>
</dbReference>
<dbReference type="Gene3D" id="3.90.25.10">
    <property type="entry name" value="UDP-galactose 4-epimerase, domain 1"/>
    <property type="match status" value="1"/>
</dbReference>
<dbReference type="HAMAP" id="MF_01601">
    <property type="entry name" value="Heptose_epimerase"/>
    <property type="match status" value="1"/>
</dbReference>
<dbReference type="InterPro" id="IPR001509">
    <property type="entry name" value="Epimerase_deHydtase"/>
</dbReference>
<dbReference type="InterPro" id="IPR011912">
    <property type="entry name" value="Heptose_epim"/>
</dbReference>
<dbReference type="InterPro" id="IPR036291">
    <property type="entry name" value="NAD(P)-bd_dom_sf"/>
</dbReference>
<dbReference type="NCBIfam" id="TIGR02197">
    <property type="entry name" value="heptose_epim"/>
    <property type="match status" value="1"/>
</dbReference>
<dbReference type="NCBIfam" id="NF008360">
    <property type="entry name" value="PRK11150.1"/>
    <property type="match status" value="1"/>
</dbReference>
<dbReference type="PANTHER" id="PTHR43103:SF3">
    <property type="entry name" value="ADP-L-GLYCERO-D-MANNO-HEPTOSE-6-EPIMERASE"/>
    <property type="match status" value="1"/>
</dbReference>
<dbReference type="PANTHER" id="PTHR43103">
    <property type="entry name" value="NUCLEOSIDE-DIPHOSPHATE-SUGAR EPIMERASE"/>
    <property type="match status" value="1"/>
</dbReference>
<dbReference type="Pfam" id="PF01370">
    <property type="entry name" value="Epimerase"/>
    <property type="match status" value="1"/>
</dbReference>
<dbReference type="SUPFAM" id="SSF51735">
    <property type="entry name" value="NAD(P)-binding Rossmann-fold domains"/>
    <property type="match status" value="1"/>
</dbReference>
<proteinExistence type="inferred from homology"/>
<evidence type="ECO:0000255" key="1">
    <source>
        <dbReference type="HAMAP-Rule" id="MF_01601"/>
    </source>
</evidence>
<name>HLDD_ECO8A</name>
<protein>
    <recommendedName>
        <fullName evidence="1">ADP-L-glycero-D-manno-heptose-6-epimerase</fullName>
        <ecNumber evidence="1">5.1.3.20</ecNumber>
    </recommendedName>
    <alternativeName>
        <fullName evidence="1">ADP-L-glycero-beta-D-manno-heptose-6-epimerase</fullName>
        <shortName evidence="1">ADP-glyceromanno-heptose 6-epimerase</shortName>
        <shortName evidence="1">ADP-hep 6-epimerase</shortName>
        <shortName evidence="1">AGME</shortName>
    </alternativeName>
</protein>
<feature type="chain" id="PRO_1000190406" description="ADP-L-glycero-D-manno-heptose-6-epimerase">
    <location>
        <begin position="1"/>
        <end position="310"/>
    </location>
</feature>
<feature type="active site" description="Proton acceptor" evidence="1">
    <location>
        <position position="140"/>
    </location>
</feature>
<feature type="active site" description="Proton acceptor" evidence="1">
    <location>
        <position position="178"/>
    </location>
</feature>
<feature type="binding site" evidence="1">
    <location>
        <begin position="10"/>
        <end position="11"/>
    </location>
    <ligand>
        <name>NADP(+)</name>
        <dbReference type="ChEBI" id="CHEBI:58349"/>
    </ligand>
</feature>
<feature type="binding site" evidence="1">
    <location>
        <begin position="31"/>
        <end position="32"/>
    </location>
    <ligand>
        <name>NADP(+)</name>
        <dbReference type="ChEBI" id="CHEBI:58349"/>
    </ligand>
</feature>
<feature type="binding site" evidence="1">
    <location>
        <position position="38"/>
    </location>
    <ligand>
        <name>NADP(+)</name>
        <dbReference type="ChEBI" id="CHEBI:58349"/>
    </ligand>
</feature>
<feature type="binding site" evidence="1">
    <location>
        <position position="53"/>
    </location>
    <ligand>
        <name>NADP(+)</name>
        <dbReference type="ChEBI" id="CHEBI:58349"/>
    </ligand>
</feature>
<feature type="binding site" evidence="1">
    <location>
        <begin position="75"/>
        <end position="79"/>
    </location>
    <ligand>
        <name>NADP(+)</name>
        <dbReference type="ChEBI" id="CHEBI:58349"/>
    </ligand>
</feature>
<feature type="binding site" evidence="1">
    <location>
        <position position="92"/>
    </location>
    <ligand>
        <name>NADP(+)</name>
        <dbReference type="ChEBI" id="CHEBI:58349"/>
    </ligand>
</feature>
<feature type="binding site" evidence="1">
    <location>
        <position position="144"/>
    </location>
    <ligand>
        <name>NADP(+)</name>
        <dbReference type="ChEBI" id="CHEBI:58349"/>
    </ligand>
</feature>
<feature type="binding site" evidence="1">
    <location>
        <position position="169"/>
    </location>
    <ligand>
        <name>substrate</name>
    </ligand>
</feature>
<feature type="binding site" evidence="1">
    <location>
        <position position="170"/>
    </location>
    <ligand>
        <name>NADP(+)</name>
        <dbReference type="ChEBI" id="CHEBI:58349"/>
    </ligand>
</feature>
<feature type="binding site" evidence="1">
    <location>
        <position position="178"/>
    </location>
    <ligand>
        <name>NADP(+)</name>
        <dbReference type="ChEBI" id="CHEBI:58349"/>
    </ligand>
</feature>
<feature type="binding site" evidence="1">
    <location>
        <position position="180"/>
    </location>
    <ligand>
        <name>substrate</name>
    </ligand>
</feature>
<feature type="binding site" evidence="1">
    <location>
        <position position="187"/>
    </location>
    <ligand>
        <name>substrate</name>
    </ligand>
</feature>
<feature type="binding site" evidence="1">
    <location>
        <begin position="201"/>
        <end position="204"/>
    </location>
    <ligand>
        <name>substrate</name>
    </ligand>
</feature>
<feature type="binding site" evidence="1">
    <location>
        <position position="209"/>
    </location>
    <ligand>
        <name>substrate</name>
    </ligand>
</feature>
<feature type="binding site" evidence="1">
    <location>
        <position position="272"/>
    </location>
    <ligand>
        <name>substrate</name>
    </ligand>
</feature>
<feature type="modified residue" description="N6-acetyllysine" evidence="1">
    <location>
        <position position="267"/>
    </location>
</feature>
<reference key="1">
    <citation type="journal article" date="2009" name="PLoS Genet.">
        <title>Organised genome dynamics in the Escherichia coli species results in highly diverse adaptive paths.</title>
        <authorList>
            <person name="Touchon M."/>
            <person name="Hoede C."/>
            <person name="Tenaillon O."/>
            <person name="Barbe V."/>
            <person name="Baeriswyl S."/>
            <person name="Bidet P."/>
            <person name="Bingen E."/>
            <person name="Bonacorsi S."/>
            <person name="Bouchier C."/>
            <person name="Bouvet O."/>
            <person name="Calteau A."/>
            <person name="Chiapello H."/>
            <person name="Clermont O."/>
            <person name="Cruveiller S."/>
            <person name="Danchin A."/>
            <person name="Diard M."/>
            <person name="Dossat C."/>
            <person name="Karoui M.E."/>
            <person name="Frapy E."/>
            <person name="Garry L."/>
            <person name="Ghigo J.M."/>
            <person name="Gilles A.M."/>
            <person name="Johnson J."/>
            <person name="Le Bouguenec C."/>
            <person name="Lescat M."/>
            <person name="Mangenot S."/>
            <person name="Martinez-Jehanne V."/>
            <person name="Matic I."/>
            <person name="Nassif X."/>
            <person name="Oztas S."/>
            <person name="Petit M.A."/>
            <person name="Pichon C."/>
            <person name="Rouy Z."/>
            <person name="Ruf C.S."/>
            <person name="Schneider D."/>
            <person name="Tourret J."/>
            <person name="Vacherie B."/>
            <person name="Vallenet D."/>
            <person name="Medigue C."/>
            <person name="Rocha E.P.C."/>
            <person name="Denamur E."/>
        </authorList>
    </citation>
    <scope>NUCLEOTIDE SEQUENCE [LARGE SCALE GENOMIC DNA]</scope>
    <source>
        <strain>IAI1</strain>
    </source>
</reference>
<accession>B7M4A5</accession>
<sequence>MIIVTGGAGFIGSNIVKALNDKGITDILVVDNLKDGTKFVNLVDLNIADYMDKEDFLIQIMAGEEFGDVEAIFHEGACSSTTEWDGKYMMDNNYQYSKELLHYCLEREIPFLYASSAATYGGRTSDFIESREYEKPLNVYGYSKFLFDEYVRQILPEANSQIVGFRYFNVYGPREGHKGSMASVAFHLNTQLNNGESPKLFEGSENFKRDFVYVGDVADVNLWFLENGVSGIFNLGTGRAESFQAVADATLAYHKKGQIEYIPFPDKLKGRYQAFTQADLTNLRAAGYDKPFKTVAEGVTEYMAWLNRDA</sequence>
<comment type="function">
    <text evidence="1">Catalyzes the interconversion between ADP-D-glycero-beta-D-manno-heptose and ADP-L-glycero-beta-D-manno-heptose via an epimerization at carbon 6 of the heptose.</text>
</comment>
<comment type="catalytic activity">
    <reaction evidence="1">
        <text>ADP-D-glycero-beta-D-manno-heptose = ADP-L-glycero-beta-D-manno-heptose</text>
        <dbReference type="Rhea" id="RHEA:17577"/>
        <dbReference type="ChEBI" id="CHEBI:59967"/>
        <dbReference type="ChEBI" id="CHEBI:61506"/>
        <dbReference type="EC" id="5.1.3.20"/>
    </reaction>
</comment>
<comment type="cofactor">
    <cofactor evidence="1">
        <name>NADP(+)</name>
        <dbReference type="ChEBI" id="CHEBI:58349"/>
    </cofactor>
    <text evidence="1">Binds 1 NADP(+) per subunit.</text>
</comment>
<comment type="pathway">
    <text evidence="1">Nucleotide-sugar biosynthesis; ADP-L-glycero-beta-D-manno-heptose biosynthesis; ADP-L-glycero-beta-D-manno-heptose from D-glycero-beta-D-manno-heptose 7-phosphate: step 4/4.</text>
</comment>
<comment type="subunit">
    <text evidence="1">Homopentamer.</text>
</comment>
<comment type="domain">
    <text evidence="1">Contains a large N-terminal NADP-binding domain, and a smaller C-terminal substrate-binding domain.</text>
</comment>
<comment type="similarity">
    <text evidence="1">Belongs to the NAD(P)-dependent epimerase/dehydratase family. HldD subfamily.</text>
</comment>
<organism>
    <name type="scientific">Escherichia coli O8 (strain IAI1)</name>
    <dbReference type="NCBI Taxonomy" id="585034"/>
    <lineage>
        <taxon>Bacteria</taxon>
        <taxon>Pseudomonadati</taxon>
        <taxon>Pseudomonadota</taxon>
        <taxon>Gammaproteobacteria</taxon>
        <taxon>Enterobacterales</taxon>
        <taxon>Enterobacteriaceae</taxon>
        <taxon>Escherichia</taxon>
    </lineage>
</organism>
<keyword id="KW-0007">Acetylation</keyword>
<keyword id="KW-0119">Carbohydrate metabolism</keyword>
<keyword id="KW-0413">Isomerase</keyword>
<keyword id="KW-0521">NADP</keyword>